<accession>Q8K936</accession>
<reference key="1">
    <citation type="journal article" date="2002" name="Science">
        <title>50 million years of genomic stasis in endosymbiotic bacteria.</title>
        <authorList>
            <person name="Tamas I."/>
            <person name="Klasson L."/>
            <person name="Canbaeck B."/>
            <person name="Naeslund A.K."/>
            <person name="Eriksson A.-S."/>
            <person name="Wernegreen J.J."/>
            <person name="Sandstroem J.P."/>
            <person name="Moran N.A."/>
            <person name="Andersson S.G.E."/>
        </authorList>
    </citation>
    <scope>NUCLEOTIDE SEQUENCE [LARGE SCALE GENOMIC DNA]</scope>
    <source>
        <strain>Sg</strain>
    </source>
</reference>
<keyword id="KW-0963">Cytoplasm</keyword>
<keyword id="KW-0413">Isomerase</keyword>
<keyword id="KW-0464">Manganese</keyword>
<keyword id="KW-0479">Metal-binding</keyword>
<comment type="function">
    <text evidence="1">Isomerase that catalyzes the conversion of deoxy-ribose 1-phosphate (dRib-1-P) and ribose 1-phosphate (Rib-1-P) to deoxy-ribose 5-phosphate (dRib-5-P) and ribose 5-phosphate (Rib-5-P), respectively.</text>
</comment>
<comment type="catalytic activity">
    <reaction evidence="1">
        <text>2-deoxy-alpha-D-ribose 1-phosphate = 2-deoxy-D-ribose 5-phosphate</text>
        <dbReference type="Rhea" id="RHEA:27658"/>
        <dbReference type="ChEBI" id="CHEBI:57259"/>
        <dbReference type="ChEBI" id="CHEBI:62877"/>
        <dbReference type="EC" id="5.4.2.7"/>
    </reaction>
</comment>
<comment type="catalytic activity">
    <reaction evidence="1">
        <text>alpha-D-ribose 1-phosphate = D-ribose 5-phosphate</text>
        <dbReference type="Rhea" id="RHEA:18793"/>
        <dbReference type="ChEBI" id="CHEBI:57720"/>
        <dbReference type="ChEBI" id="CHEBI:78346"/>
        <dbReference type="EC" id="5.4.2.7"/>
    </reaction>
</comment>
<comment type="cofactor">
    <cofactor evidence="1">
        <name>Mn(2+)</name>
        <dbReference type="ChEBI" id="CHEBI:29035"/>
    </cofactor>
    <text evidence="1">Binds 2 manganese ions.</text>
</comment>
<comment type="pathway">
    <text evidence="1">Carbohydrate degradation; 2-deoxy-D-ribose 1-phosphate degradation; D-glyceraldehyde 3-phosphate and acetaldehyde from 2-deoxy-alpha-D-ribose 1-phosphate: step 1/2.</text>
</comment>
<comment type="subcellular location">
    <subcellularLocation>
        <location evidence="1">Cytoplasm</location>
    </subcellularLocation>
</comment>
<comment type="similarity">
    <text evidence="1">Belongs to the phosphopentomutase family.</text>
</comment>
<proteinExistence type="inferred from homology"/>
<feature type="chain" id="PRO_0000199812" description="Phosphopentomutase">
    <location>
        <begin position="1"/>
        <end position="409"/>
    </location>
</feature>
<feature type="binding site" evidence="1">
    <location>
        <position position="10"/>
    </location>
    <ligand>
        <name>Mn(2+)</name>
        <dbReference type="ChEBI" id="CHEBI:29035"/>
        <label>1</label>
    </ligand>
</feature>
<feature type="binding site" evidence="1">
    <location>
        <position position="308"/>
    </location>
    <ligand>
        <name>Mn(2+)</name>
        <dbReference type="ChEBI" id="CHEBI:29035"/>
        <label>2</label>
    </ligand>
</feature>
<feature type="binding site" evidence="1">
    <location>
        <position position="313"/>
    </location>
    <ligand>
        <name>Mn(2+)</name>
        <dbReference type="ChEBI" id="CHEBI:29035"/>
        <label>2</label>
    </ligand>
</feature>
<feature type="binding site" evidence="1">
    <location>
        <position position="349"/>
    </location>
    <ligand>
        <name>Mn(2+)</name>
        <dbReference type="ChEBI" id="CHEBI:29035"/>
        <label>1</label>
    </ligand>
</feature>
<feature type="binding site" evidence="1">
    <location>
        <position position="350"/>
    </location>
    <ligand>
        <name>Mn(2+)</name>
        <dbReference type="ChEBI" id="CHEBI:29035"/>
        <label>1</label>
    </ligand>
</feature>
<feature type="binding site" evidence="1">
    <location>
        <position position="361"/>
    </location>
    <ligand>
        <name>Mn(2+)</name>
        <dbReference type="ChEBI" id="CHEBI:29035"/>
        <label>2</label>
    </ligand>
</feature>
<gene>
    <name evidence="1" type="primary">deoB</name>
    <name type="ordered locus">BUsg_522</name>
</gene>
<protein>
    <recommendedName>
        <fullName evidence="1">Phosphopentomutase</fullName>
        <ecNumber evidence="1">5.4.2.7</ecNumber>
    </recommendedName>
    <alternativeName>
        <fullName evidence="1">Phosphodeoxyribomutase</fullName>
    </alternativeName>
</protein>
<evidence type="ECO:0000255" key="1">
    <source>
        <dbReference type="HAMAP-Rule" id="MF_00740"/>
    </source>
</evidence>
<organism>
    <name type="scientific">Buchnera aphidicola subsp. Schizaphis graminum (strain Sg)</name>
    <dbReference type="NCBI Taxonomy" id="198804"/>
    <lineage>
        <taxon>Bacteria</taxon>
        <taxon>Pseudomonadati</taxon>
        <taxon>Pseudomonadota</taxon>
        <taxon>Gammaproteobacteria</taxon>
        <taxon>Enterobacterales</taxon>
        <taxon>Erwiniaceae</taxon>
        <taxon>Buchnera</taxon>
    </lineage>
</organism>
<dbReference type="EC" id="5.4.2.7" evidence="1"/>
<dbReference type="EMBL" id="AE013218">
    <property type="protein sequence ID" value="AAM68065.1"/>
    <property type="molecule type" value="Genomic_DNA"/>
</dbReference>
<dbReference type="RefSeq" id="WP_011054031.1">
    <property type="nucleotide sequence ID" value="NC_004061.1"/>
</dbReference>
<dbReference type="SMR" id="Q8K936"/>
<dbReference type="STRING" id="198804.BUsg_522"/>
<dbReference type="GeneID" id="93003998"/>
<dbReference type="KEGG" id="bas:BUsg_522"/>
<dbReference type="eggNOG" id="COG1015">
    <property type="taxonomic scope" value="Bacteria"/>
</dbReference>
<dbReference type="HOGENOM" id="CLU_053861_0_0_6"/>
<dbReference type="UniPathway" id="UPA00002">
    <property type="reaction ID" value="UER00467"/>
</dbReference>
<dbReference type="Proteomes" id="UP000000416">
    <property type="component" value="Chromosome"/>
</dbReference>
<dbReference type="GO" id="GO:0005829">
    <property type="term" value="C:cytosol"/>
    <property type="evidence" value="ECO:0007669"/>
    <property type="project" value="TreeGrafter"/>
</dbReference>
<dbReference type="GO" id="GO:0000287">
    <property type="term" value="F:magnesium ion binding"/>
    <property type="evidence" value="ECO:0007669"/>
    <property type="project" value="InterPro"/>
</dbReference>
<dbReference type="GO" id="GO:0030145">
    <property type="term" value="F:manganese ion binding"/>
    <property type="evidence" value="ECO:0007669"/>
    <property type="project" value="UniProtKB-UniRule"/>
</dbReference>
<dbReference type="GO" id="GO:0008973">
    <property type="term" value="F:phosphopentomutase activity"/>
    <property type="evidence" value="ECO:0007669"/>
    <property type="project" value="UniProtKB-UniRule"/>
</dbReference>
<dbReference type="GO" id="GO:0006018">
    <property type="term" value="P:2-deoxyribose 1-phosphate catabolic process"/>
    <property type="evidence" value="ECO:0007669"/>
    <property type="project" value="UniProtKB-UniRule"/>
</dbReference>
<dbReference type="GO" id="GO:0006015">
    <property type="term" value="P:5-phosphoribose 1-diphosphate biosynthetic process"/>
    <property type="evidence" value="ECO:0007669"/>
    <property type="project" value="UniProtKB-UniPathway"/>
</dbReference>
<dbReference type="GO" id="GO:0043094">
    <property type="term" value="P:metabolic compound salvage"/>
    <property type="evidence" value="ECO:0007669"/>
    <property type="project" value="InterPro"/>
</dbReference>
<dbReference type="GO" id="GO:0009117">
    <property type="term" value="P:nucleotide metabolic process"/>
    <property type="evidence" value="ECO:0007669"/>
    <property type="project" value="InterPro"/>
</dbReference>
<dbReference type="CDD" id="cd16009">
    <property type="entry name" value="PPM"/>
    <property type="match status" value="1"/>
</dbReference>
<dbReference type="FunFam" id="3.30.70.1250:FF:000001">
    <property type="entry name" value="Phosphopentomutase"/>
    <property type="match status" value="1"/>
</dbReference>
<dbReference type="Gene3D" id="3.40.720.10">
    <property type="entry name" value="Alkaline Phosphatase, subunit A"/>
    <property type="match status" value="1"/>
</dbReference>
<dbReference type="Gene3D" id="3.30.70.1250">
    <property type="entry name" value="Phosphopentomutase"/>
    <property type="match status" value="1"/>
</dbReference>
<dbReference type="HAMAP" id="MF_00740">
    <property type="entry name" value="Phosphopentomut"/>
    <property type="match status" value="1"/>
</dbReference>
<dbReference type="InterPro" id="IPR017850">
    <property type="entry name" value="Alkaline_phosphatase_core_sf"/>
</dbReference>
<dbReference type="InterPro" id="IPR010045">
    <property type="entry name" value="DeoB"/>
</dbReference>
<dbReference type="InterPro" id="IPR006124">
    <property type="entry name" value="Metalloenzyme"/>
</dbReference>
<dbReference type="InterPro" id="IPR024052">
    <property type="entry name" value="Phosphopentomutase_DeoB_cap_sf"/>
</dbReference>
<dbReference type="NCBIfam" id="TIGR01696">
    <property type="entry name" value="deoB"/>
    <property type="match status" value="1"/>
</dbReference>
<dbReference type="NCBIfam" id="NF003766">
    <property type="entry name" value="PRK05362.1"/>
    <property type="match status" value="1"/>
</dbReference>
<dbReference type="PANTHER" id="PTHR21110">
    <property type="entry name" value="PHOSPHOPENTOMUTASE"/>
    <property type="match status" value="1"/>
</dbReference>
<dbReference type="PANTHER" id="PTHR21110:SF0">
    <property type="entry name" value="PHOSPHOPENTOMUTASE"/>
    <property type="match status" value="1"/>
</dbReference>
<dbReference type="Pfam" id="PF01676">
    <property type="entry name" value="Metalloenzyme"/>
    <property type="match status" value="1"/>
</dbReference>
<dbReference type="PIRSF" id="PIRSF001491">
    <property type="entry name" value="Ppentomutase"/>
    <property type="match status" value="1"/>
</dbReference>
<dbReference type="SUPFAM" id="SSF53649">
    <property type="entry name" value="Alkaline phosphatase-like"/>
    <property type="match status" value="1"/>
</dbReference>
<dbReference type="SUPFAM" id="SSF143856">
    <property type="entry name" value="DeoB insert domain-like"/>
    <property type="match status" value="1"/>
</dbReference>
<sequence>MKRVFLMILDSLGIGSSVDACKFNDSGADTLGHIAEKCFFNEANVQRRGSLYIPNLIKLGIVKSYQSSTGKYLLGFNQKEDANIIASYGYASELSSGKDTTSGHWEIAGAPFLKDWYYFKEKDNSFPSSLINKIITKLKLPGILGNCHASGTEIIKILGEEHIKTGKPIFYTSCDSVFQIACHEIKFGLSNLYKICENIREILDQNKYQVARVIARPFIGTNKSNFNRTGNRRDISMKPLSITFMEKLIQEKQGKVIAIGKISDIYAGVGISKNIKSTGLYELCHTTIHQMKSAKNNTVIFTNFVDFDSVWGHRRDVSGYAKGLEFFDSKLSEMIDLVKEGDLFILTADHGCDPTWKGTDHTRENVPILIYSPGEEIKFLGHRDTFSDIGQTIAKYFSLSDMKYGKSMF</sequence>
<name>DEOB_BUCAP</name>